<gene>
    <name type="ordered locus">Os02g0201900</name>
    <name type="ordered locus">LOC_Os02g10770</name>
    <name type="ORF">P0419A09.31</name>
</gene>
<protein>
    <recommendedName>
        <fullName>DEAD-box ATP-dependent RNA helicase 41</fullName>
        <ecNumber>3.6.4.13</ecNumber>
    </recommendedName>
</protein>
<comment type="catalytic activity">
    <reaction>
        <text>ATP + H2O = ADP + phosphate + H(+)</text>
        <dbReference type="Rhea" id="RHEA:13065"/>
        <dbReference type="ChEBI" id="CHEBI:15377"/>
        <dbReference type="ChEBI" id="CHEBI:15378"/>
        <dbReference type="ChEBI" id="CHEBI:30616"/>
        <dbReference type="ChEBI" id="CHEBI:43474"/>
        <dbReference type="ChEBI" id="CHEBI:456216"/>
        <dbReference type="EC" id="3.6.4.13"/>
    </reaction>
</comment>
<comment type="domain">
    <text>The Q motif is unique to and characteristic of the DEAD box family of RNA helicases and controls ATP binding and hydrolysis.</text>
</comment>
<comment type="similarity">
    <text evidence="4">Belongs to the DEAD box helicase family. DDX59 subfamily.</text>
</comment>
<comment type="sequence caution" evidence="4">
    <conflict type="erroneous gene model prediction">
        <sequence resource="EMBL-CDS" id="BAF08141"/>
    </conflict>
</comment>
<evidence type="ECO:0000255" key="1">
    <source>
        <dbReference type="PROSITE-ProRule" id="PRU00541"/>
    </source>
</evidence>
<evidence type="ECO:0000255" key="2">
    <source>
        <dbReference type="PROSITE-ProRule" id="PRU00542"/>
    </source>
</evidence>
<evidence type="ECO:0000256" key="3">
    <source>
        <dbReference type="SAM" id="MobiDB-lite"/>
    </source>
</evidence>
<evidence type="ECO:0000305" key="4"/>
<reference key="1">
    <citation type="journal article" date="2005" name="Nature">
        <title>The map-based sequence of the rice genome.</title>
        <authorList>
            <consortium name="International rice genome sequencing project (IRGSP)"/>
        </authorList>
    </citation>
    <scope>NUCLEOTIDE SEQUENCE [LARGE SCALE GENOMIC DNA]</scope>
    <source>
        <strain>cv. Nipponbare</strain>
    </source>
</reference>
<reference key="2">
    <citation type="journal article" date="2008" name="Nucleic Acids Res.">
        <title>The rice annotation project database (RAP-DB): 2008 update.</title>
        <authorList>
            <consortium name="The rice annotation project (RAP)"/>
        </authorList>
    </citation>
    <scope>GENOME REANNOTATION</scope>
    <source>
        <strain>cv. Nipponbare</strain>
    </source>
</reference>
<reference key="3">
    <citation type="journal article" date="2013" name="Rice">
        <title>Improvement of the Oryza sativa Nipponbare reference genome using next generation sequence and optical map data.</title>
        <authorList>
            <person name="Kawahara Y."/>
            <person name="de la Bastide M."/>
            <person name="Hamilton J.P."/>
            <person name="Kanamori H."/>
            <person name="McCombie W.R."/>
            <person name="Ouyang S."/>
            <person name="Schwartz D.C."/>
            <person name="Tanaka T."/>
            <person name="Wu J."/>
            <person name="Zhou S."/>
            <person name="Childs K.L."/>
            <person name="Davidson R.M."/>
            <person name="Lin H."/>
            <person name="Quesada-Ocampo L."/>
            <person name="Vaillancourt B."/>
            <person name="Sakai H."/>
            <person name="Lee S.S."/>
            <person name="Kim J."/>
            <person name="Numa H."/>
            <person name="Itoh T."/>
            <person name="Buell C.R."/>
            <person name="Matsumoto T."/>
        </authorList>
    </citation>
    <scope>GENOME REANNOTATION</scope>
    <source>
        <strain>cv. Nipponbare</strain>
    </source>
</reference>
<reference key="4">
    <citation type="journal article" date="2003" name="Science">
        <title>Collection, mapping, and annotation of over 28,000 cDNA clones from japonica rice.</title>
        <authorList>
            <consortium name="The rice full-length cDNA consortium"/>
        </authorList>
    </citation>
    <scope>NUCLEOTIDE SEQUENCE [LARGE SCALE MRNA]</scope>
    <source>
        <strain>cv. Nipponbare</strain>
    </source>
</reference>
<sequence length="536" mass="59046">MEQEENHSADHLSAQPGNGNELEESSVKERCFEQREALVGEPRCVICGRYGEYICDQTDDDICSVECKTILLSKLSAETRPVVKAAKRVNLPVGDESFCIRDENFPKIPSMHDGQIASLRSKLDICVKGEDVPDPIMCFSSSGLPEKLVLNLEAAGYVMPTPVQMQVIPSSICNRSLLVSADTGSGKTASFLVPIIAHCSHVRSERCTDKQGPLAIVLAPTRELCLQVEEQAKVLGKGLPFKTALVVGGDPLAQQIYRIENGIELIVGTPGRLIDLLMKHNVDLNKVDVFVLDEVDCLLERGFRDQVMQIFQALSHPQVMMFSATVNSEVEKMSNSLAKNAIHISCGNPSRPNKSVKQVVIWVESKQKKQKIFEIMTSKQHFKPPAVVFVSSRIGADLLSEAITVATGLKVVSIHGDKTMNERRESLRRFLTGEVSVVVCTGVLGRGMDLLKVRQVILFDMPNSIDEYVHQVGRASRMGVEGMAIVFVNEEDRNLFRELVQILKTAGAPIPRELANSKYTTGIPLGGGKKRKLKSR</sequence>
<dbReference type="EC" id="3.6.4.13"/>
<dbReference type="EMBL" id="AP004869">
    <property type="protein sequence ID" value="BAD15860.1"/>
    <property type="molecule type" value="Genomic_DNA"/>
</dbReference>
<dbReference type="EMBL" id="AP008208">
    <property type="protein sequence ID" value="BAF08141.1"/>
    <property type="status" value="ALT_SEQ"/>
    <property type="molecule type" value="Genomic_DNA"/>
</dbReference>
<dbReference type="EMBL" id="AP014958">
    <property type="protein sequence ID" value="BAS77523.1"/>
    <property type="molecule type" value="Genomic_DNA"/>
</dbReference>
<dbReference type="EMBL" id="AK072368">
    <property type="protein sequence ID" value="BAG92939.1"/>
    <property type="molecule type" value="mRNA"/>
</dbReference>
<dbReference type="EMBL" id="AK120266">
    <property type="protein sequence ID" value="BAG99943.1"/>
    <property type="molecule type" value="mRNA"/>
</dbReference>
<dbReference type="RefSeq" id="XP_015627193.1">
    <property type="nucleotide sequence ID" value="XM_015771707.1"/>
</dbReference>
<dbReference type="SMR" id="Q0E2Z7"/>
<dbReference type="FunCoup" id="Q0E2Z7">
    <property type="interactions" value="713"/>
</dbReference>
<dbReference type="STRING" id="39947.Q0E2Z7"/>
<dbReference type="PaxDb" id="39947-Q0E2Z7"/>
<dbReference type="EnsemblPlants" id="Os02t0201900-01">
    <property type="protein sequence ID" value="Os02t0201900-01"/>
    <property type="gene ID" value="Os02g0201900"/>
</dbReference>
<dbReference type="Gramene" id="Os02t0201900-01">
    <property type="protein sequence ID" value="Os02t0201900-01"/>
    <property type="gene ID" value="Os02g0201900"/>
</dbReference>
<dbReference type="KEGG" id="dosa:Os02g0201900"/>
<dbReference type="eggNOG" id="KOG0331">
    <property type="taxonomic scope" value="Eukaryota"/>
</dbReference>
<dbReference type="HOGENOM" id="CLU_003041_1_5_1"/>
<dbReference type="InParanoid" id="Q0E2Z7"/>
<dbReference type="OMA" id="DESFCIR"/>
<dbReference type="OrthoDB" id="360161at2759"/>
<dbReference type="Proteomes" id="UP000000763">
    <property type="component" value="Chromosome 2"/>
</dbReference>
<dbReference type="Proteomes" id="UP000059680">
    <property type="component" value="Chromosome 2"/>
</dbReference>
<dbReference type="ExpressionAtlas" id="Q0E2Z7">
    <property type="expression patterns" value="baseline and differential"/>
</dbReference>
<dbReference type="GO" id="GO:0005524">
    <property type="term" value="F:ATP binding"/>
    <property type="evidence" value="ECO:0007669"/>
    <property type="project" value="UniProtKB-KW"/>
</dbReference>
<dbReference type="GO" id="GO:0016887">
    <property type="term" value="F:ATP hydrolysis activity"/>
    <property type="evidence" value="ECO:0007669"/>
    <property type="project" value="RHEA"/>
</dbReference>
<dbReference type="GO" id="GO:0003729">
    <property type="term" value="F:mRNA binding"/>
    <property type="evidence" value="ECO:0000318"/>
    <property type="project" value="GO_Central"/>
</dbReference>
<dbReference type="GO" id="GO:0003724">
    <property type="term" value="F:RNA helicase activity"/>
    <property type="evidence" value="ECO:0000318"/>
    <property type="project" value="GO_Central"/>
</dbReference>
<dbReference type="GO" id="GO:0008270">
    <property type="term" value="F:zinc ion binding"/>
    <property type="evidence" value="ECO:0007669"/>
    <property type="project" value="UniProtKB-KW"/>
</dbReference>
<dbReference type="CDD" id="cd18787">
    <property type="entry name" value="SF2_C_DEAD"/>
    <property type="match status" value="1"/>
</dbReference>
<dbReference type="CDD" id="cd23022">
    <property type="entry name" value="zf-HIT_DDX59"/>
    <property type="match status" value="1"/>
</dbReference>
<dbReference type="FunFam" id="3.30.60.220:FF:000002">
    <property type="entry name" value="DEAD-box ATP-dependent RNA helicase 41"/>
    <property type="match status" value="1"/>
</dbReference>
<dbReference type="Gene3D" id="3.30.60.220">
    <property type="match status" value="1"/>
</dbReference>
<dbReference type="Gene3D" id="3.40.50.300">
    <property type="entry name" value="P-loop containing nucleotide triphosphate hydrolases"/>
    <property type="match status" value="2"/>
</dbReference>
<dbReference type="InterPro" id="IPR011545">
    <property type="entry name" value="DEAD/DEAH_box_helicase_dom"/>
</dbReference>
<dbReference type="InterPro" id="IPR014001">
    <property type="entry name" value="Helicase_ATP-bd"/>
</dbReference>
<dbReference type="InterPro" id="IPR001650">
    <property type="entry name" value="Helicase_C-like"/>
</dbReference>
<dbReference type="InterPro" id="IPR027417">
    <property type="entry name" value="P-loop_NTPase"/>
</dbReference>
<dbReference type="InterPro" id="IPR014014">
    <property type="entry name" value="RNA_helicase_DEAD_Q_motif"/>
</dbReference>
<dbReference type="InterPro" id="IPR007529">
    <property type="entry name" value="Znf_HIT"/>
</dbReference>
<dbReference type="PANTHER" id="PTHR47958">
    <property type="entry name" value="ATP-DEPENDENT RNA HELICASE DBP3"/>
    <property type="match status" value="1"/>
</dbReference>
<dbReference type="Pfam" id="PF00270">
    <property type="entry name" value="DEAD"/>
    <property type="match status" value="1"/>
</dbReference>
<dbReference type="Pfam" id="PF00271">
    <property type="entry name" value="Helicase_C"/>
    <property type="match status" value="1"/>
</dbReference>
<dbReference type="Pfam" id="PF04438">
    <property type="entry name" value="zf-HIT"/>
    <property type="match status" value="1"/>
</dbReference>
<dbReference type="SMART" id="SM00487">
    <property type="entry name" value="DEXDc"/>
    <property type="match status" value="1"/>
</dbReference>
<dbReference type="SMART" id="SM00490">
    <property type="entry name" value="HELICc"/>
    <property type="match status" value="1"/>
</dbReference>
<dbReference type="SUPFAM" id="SSF52540">
    <property type="entry name" value="P-loop containing nucleoside triphosphate hydrolases"/>
    <property type="match status" value="1"/>
</dbReference>
<dbReference type="PROSITE" id="PS51192">
    <property type="entry name" value="HELICASE_ATP_BIND_1"/>
    <property type="match status" value="1"/>
</dbReference>
<dbReference type="PROSITE" id="PS51194">
    <property type="entry name" value="HELICASE_CTER"/>
    <property type="match status" value="1"/>
</dbReference>
<dbReference type="PROSITE" id="PS51195">
    <property type="entry name" value="Q_MOTIF"/>
    <property type="match status" value="1"/>
</dbReference>
<proteinExistence type="evidence at transcript level"/>
<organism>
    <name type="scientific">Oryza sativa subsp. japonica</name>
    <name type="common">Rice</name>
    <dbReference type="NCBI Taxonomy" id="39947"/>
    <lineage>
        <taxon>Eukaryota</taxon>
        <taxon>Viridiplantae</taxon>
        <taxon>Streptophyta</taxon>
        <taxon>Embryophyta</taxon>
        <taxon>Tracheophyta</taxon>
        <taxon>Spermatophyta</taxon>
        <taxon>Magnoliopsida</taxon>
        <taxon>Liliopsida</taxon>
        <taxon>Poales</taxon>
        <taxon>Poaceae</taxon>
        <taxon>BOP clade</taxon>
        <taxon>Oryzoideae</taxon>
        <taxon>Oryzeae</taxon>
        <taxon>Oryzinae</taxon>
        <taxon>Oryza</taxon>
        <taxon>Oryza sativa</taxon>
    </lineage>
</organism>
<name>RH41_ORYSJ</name>
<feature type="chain" id="PRO_0000282510" description="DEAD-box ATP-dependent RNA helicase 41">
    <location>
        <begin position="1"/>
        <end position="536"/>
    </location>
</feature>
<feature type="domain" description="Helicase ATP-binding" evidence="1">
    <location>
        <begin position="168"/>
        <end position="344"/>
    </location>
</feature>
<feature type="domain" description="Helicase C-terminal" evidence="2">
    <location>
        <begin position="355"/>
        <end position="518"/>
    </location>
</feature>
<feature type="zinc finger region" description="HIT-type">
    <location>
        <begin position="40"/>
        <end position="69"/>
    </location>
</feature>
<feature type="region of interest" description="Disordered" evidence="3">
    <location>
        <begin position="1"/>
        <end position="25"/>
    </location>
</feature>
<feature type="short sequence motif" description="Q motif">
    <location>
        <begin position="137"/>
        <end position="165"/>
    </location>
</feature>
<feature type="short sequence motif" description="DEAD box">
    <location>
        <begin position="293"/>
        <end position="296"/>
    </location>
</feature>
<feature type="compositionally biased region" description="Basic and acidic residues" evidence="3">
    <location>
        <begin position="1"/>
        <end position="10"/>
    </location>
</feature>
<feature type="binding site" evidence="1">
    <location>
        <begin position="181"/>
        <end position="188"/>
    </location>
    <ligand>
        <name>ATP</name>
        <dbReference type="ChEBI" id="CHEBI:30616"/>
    </ligand>
</feature>
<keyword id="KW-0067">ATP-binding</keyword>
<keyword id="KW-0347">Helicase</keyword>
<keyword id="KW-0378">Hydrolase</keyword>
<keyword id="KW-0479">Metal-binding</keyword>
<keyword id="KW-0547">Nucleotide-binding</keyword>
<keyword id="KW-1185">Reference proteome</keyword>
<keyword id="KW-0694">RNA-binding</keyword>
<keyword id="KW-0862">Zinc</keyword>
<keyword id="KW-0863">Zinc-finger</keyword>
<accession>Q0E2Z7</accession>
<accession>B7EKP2</accession>
<accession>Q6Z785</accession>